<accession>A4XHT8</accession>
<organism>
    <name type="scientific">Caldicellulosiruptor saccharolyticus (strain ATCC 43494 / DSM 8903 / Tp8T 6331)</name>
    <dbReference type="NCBI Taxonomy" id="351627"/>
    <lineage>
        <taxon>Bacteria</taxon>
        <taxon>Bacillati</taxon>
        <taxon>Bacillota</taxon>
        <taxon>Bacillota incertae sedis</taxon>
        <taxon>Caldicellulosiruptorales</taxon>
        <taxon>Caldicellulosiruptoraceae</taxon>
        <taxon>Caldicellulosiruptor</taxon>
    </lineage>
</organism>
<dbReference type="EC" id="2.5.1.6" evidence="1"/>
<dbReference type="EMBL" id="CP000679">
    <property type="protein sequence ID" value="ABP66473.1"/>
    <property type="molecule type" value="Genomic_DNA"/>
</dbReference>
<dbReference type="RefSeq" id="WP_011916419.1">
    <property type="nucleotide sequence ID" value="NC_009437.1"/>
</dbReference>
<dbReference type="SMR" id="A4XHT8"/>
<dbReference type="STRING" id="351627.Csac_0857"/>
<dbReference type="KEGG" id="csc:Csac_0857"/>
<dbReference type="eggNOG" id="COG0192">
    <property type="taxonomic scope" value="Bacteria"/>
</dbReference>
<dbReference type="HOGENOM" id="CLU_041802_1_1_9"/>
<dbReference type="OrthoDB" id="9801686at2"/>
<dbReference type="UniPathway" id="UPA00315">
    <property type="reaction ID" value="UER00080"/>
</dbReference>
<dbReference type="Proteomes" id="UP000000256">
    <property type="component" value="Chromosome"/>
</dbReference>
<dbReference type="GO" id="GO:0005737">
    <property type="term" value="C:cytoplasm"/>
    <property type="evidence" value="ECO:0007669"/>
    <property type="project" value="UniProtKB-SubCell"/>
</dbReference>
<dbReference type="GO" id="GO:0005524">
    <property type="term" value="F:ATP binding"/>
    <property type="evidence" value="ECO:0007669"/>
    <property type="project" value="UniProtKB-UniRule"/>
</dbReference>
<dbReference type="GO" id="GO:0000287">
    <property type="term" value="F:magnesium ion binding"/>
    <property type="evidence" value="ECO:0007669"/>
    <property type="project" value="UniProtKB-UniRule"/>
</dbReference>
<dbReference type="GO" id="GO:0004478">
    <property type="term" value="F:methionine adenosyltransferase activity"/>
    <property type="evidence" value="ECO:0007669"/>
    <property type="project" value="UniProtKB-UniRule"/>
</dbReference>
<dbReference type="GO" id="GO:0006730">
    <property type="term" value="P:one-carbon metabolic process"/>
    <property type="evidence" value="ECO:0007669"/>
    <property type="project" value="UniProtKB-KW"/>
</dbReference>
<dbReference type="GO" id="GO:0006556">
    <property type="term" value="P:S-adenosylmethionine biosynthetic process"/>
    <property type="evidence" value="ECO:0007669"/>
    <property type="project" value="UniProtKB-UniRule"/>
</dbReference>
<dbReference type="CDD" id="cd18079">
    <property type="entry name" value="S-AdoMet_synt"/>
    <property type="match status" value="1"/>
</dbReference>
<dbReference type="FunFam" id="3.30.300.10:FF:000003">
    <property type="entry name" value="S-adenosylmethionine synthase"/>
    <property type="match status" value="1"/>
</dbReference>
<dbReference type="FunFam" id="3.30.300.10:FF:000004">
    <property type="entry name" value="S-adenosylmethionine synthase"/>
    <property type="match status" value="1"/>
</dbReference>
<dbReference type="Gene3D" id="3.30.300.10">
    <property type="match status" value="3"/>
</dbReference>
<dbReference type="HAMAP" id="MF_00086">
    <property type="entry name" value="S_AdoMet_synth1"/>
    <property type="match status" value="1"/>
</dbReference>
<dbReference type="InterPro" id="IPR022631">
    <property type="entry name" value="ADOMET_SYNTHASE_CS"/>
</dbReference>
<dbReference type="InterPro" id="IPR022630">
    <property type="entry name" value="S-AdoMet_synt_C"/>
</dbReference>
<dbReference type="InterPro" id="IPR022629">
    <property type="entry name" value="S-AdoMet_synt_central"/>
</dbReference>
<dbReference type="InterPro" id="IPR022628">
    <property type="entry name" value="S-AdoMet_synt_N"/>
</dbReference>
<dbReference type="InterPro" id="IPR002133">
    <property type="entry name" value="S-AdoMet_synthetase"/>
</dbReference>
<dbReference type="InterPro" id="IPR022636">
    <property type="entry name" value="S-AdoMet_synthetase_sfam"/>
</dbReference>
<dbReference type="NCBIfam" id="TIGR01034">
    <property type="entry name" value="metK"/>
    <property type="match status" value="1"/>
</dbReference>
<dbReference type="PANTHER" id="PTHR11964">
    <property type="entry name" value="S-ADENOSYLMETHIONINE SYNTHETASE"/>
    <property type="match status" value="1"/>
</dbReference>
<dbReference type="Pfam" id="PF02773">
    <property type="entry name" value="S-AdoMet_synt_C"/>
    <property type="match status" value="1"/>
</dbReference>
<dbReference type="Pfam" id="PF02772">
    <property type="entry name" value="S-AdoMet_synt_M"/>
    <property type="match status" value="1"/>
</dbReference>
<dbReference type="Pfam" id="PF00438">
    <property type="entry name" value="S-AdoMet_synt_N"/>
    <property type="match status" value="1"/>
</dbReference>
<dbReference type="PIRSF" id="PIRSF000497">
    <property type="entry name" value="MAT"/>
    <property type="match status" value="1"/>
</dbReference>
<dbReference type="SUPFAM" id="SSF55973">
    <property type="entry name" value="S-adenosylmethionine synthetase"/>
    <property type="match status" value="3"/>
</dbReference>
<dbReference type="PROSITE" id="PS00376">
    <property type="entry name" value="ADOMET_SYNTHASE_1"/>
    <property type="match status" value="1"/>
</dbReference>
<dbReference type="PROSITE" id="PS00377">
    <property type="entry name" value="ADOMET_SYNTHASE_2"/>
    <property type="match status" value="1"/>
</dbReference>
<comment type="function">
    <text evidence="1">Catalyzes the formation of S-adenosylmethionine (AdoMet) from methionine and ATP. The overall synthetic reaction is composed of two sequential steps, AdoMet formation and the subsequent tripolyphosphate hydrolysis which occurs prior to release of AdoMet from the enzyme.</text>
</comment>
<comment type="catalytic activity">
    <reaction evidence="1">
        <text>L-methionine + ATP + H2O = S-adenosyl-L-methionine + phosphate + diphosphate</text>
        <dbReference type="Rhea" id="RHEA:21080"/>
        <dbReference type="ChEBI" id="CHEBI:15377"/>
        <dbReference type="ChEBI" id="CHEBI:30616"/>
        <dbReference type="ChEBI" id="CHEBI:33019"/>
        <dbReference type="ChEBI" id="CHEBI:43474"/>
        <dbReference type="ChEBI" id="CHEBI:57844"/>
        <dbReference type="ChEBI" id="CHEBI:59789"/>
        <dbReference type="EC" id="2.5.1.6"/>
    </reaction>
</comment>
<comment type="cofactor">
    <cofactor evidence="1">
        <name>Mg(2+)</name>
        <dbReference type="ChEBI" id="CHEBI:18420"/>
    </cofactor>
    <text evidence="1">Binds 2 divalent ions per subunit.</text>
</comment>
<comment type="cofactor">
    <cofactor evidence="1">
        <name>K(+)</name>
        <dbReference type="ChEBI" id="CHEBI:29103"/>
    </cofactor>
    <text evidence="1">Binds 1 potassium ion per subunit.</text>
</comment>
<comment type="pathway">
    <text evidence="1">Amino-acid biosynthesis; S-adenosyl-L-methionine biosynthesis; S-adenosyl-L-methionine from L-methionine: step 1/1.</text>
</comment>
<comment type="subunit">
    <text evidence="1">Homotetramer; dimer of dimers.</text>
</comment>
<comment type="subcellular location">
    <subcellularLocation>
        <location evidence="1">Cytoplasm</location>
    </subcellularLocation>
</comment>
<comment type="similarity">
    <text evidence="1">Belongs to the AdoMet synthase family.</text>
</comment>
<evidence type="ECO:0000255" key="1">
    <source>
        <dbReference type="HAMAP-Rule" id="MF_00086"/>
    </source>
</evidence>
<reference key="1">
    <citation type="submission" date="2007-04" db="EMBL/GenBank/DDBJ databases">
        <title>Genome sequence of the thermophilic hydrogen-producing bacterium Caldicellulosiruptor saccharolyticus DSM 8903.</title>
        <authorList>
            <person name="Copeland A."/>
            <person name="Lucas S."/>
            <person name="Lapidus A."/>
            <person name="Barry K."/>
            <person name="Detter J.C."/>
            <person name="Glavina del Rio T."/>
            <person name="Hammon N."/>
            <person name="Israni S."/>
            <person name="Dalin E."/>
            <person name="Tice H."/>
            <person name="Pitluck S."/>
            <person name="Kiss H."/>
            <person name="Brettin T."/>
            <person name="Bruce D."/>
            <person name="Han C."/>
            <person name="Schmutz J."/>
            <person name="Larimer F."/>
            <person name="Land M."/>
            <person name="Hauser L."/>
            <person name="Kyrpides N."/>
            <person name="Lykidis A."/>
            <person name="van de Werken H.J.G."/>
            <person name="Verhaart M.R.A."/>
            <person name="VanFossen A.L."/>
            <person name="Lewis D.L."/>
            <person name="Nichols J.D."/>
            <person name="Goorissen H.P."/>
            <person name="van Niel E.W.J."/>
            <person name="Stams F.J.M."/>
            <person name="Willquist K.U."/>
            <person name="Ward D.E."/>
            <person name="van der Oost J."/>
            <person name="Kelly R.M."/>
            <person name="Kengen S.M.W."/>
            <person name="Richardson P."/>
        </authorList>
    </citation>
    <scope>NUCLEOTIDE SEQUENCE [LARGE SCALE GENOMIC DNA]</scope>
    <source>
        <strain>ATCC 43494 / DSM 8903 / Tp8T 6331</strain>
    </source>
</reference>
<sequence>MRKLFTSESVTEGHPDKICDQISDAVLDAILEKDPYARVACEVAVTTGLVLVMGEITTKCYVDIPKIARDTIREIGYTRAKYGFDADTCAVITSIDEQSPDIAMGVDKALEAKLGEMTDDEIEAIGAGDQGMMFGFACDETPVLMPMPIYLAHKLARRLAYVRKGGILPYLRPDGKTQVTVEYEDDRPIRVDTIVVSTQHSPEVTHAQIEADVIEHVIKPIIPEGMLDKNTKIYINPTGRFVIGGPQGDSGLTGRKIIVDTYGGYARHGGGAFSGKDPTKVDRSATYAARYVAKNIVAAGLAKKCEVQLSYAIGVARPLSIRVDTFGTGKIDDEKIAEIVKRVFDLRPAAIIRDLDLRRPIYKKVAAYGHFGREDLDLPWERTDKVDIILKEAQNI</sequence>
<name>METK_CALS8</name>
<feature type="chain" id="PRO_1000007932" description="S-adenosylmethionine synthase">
    <location>
        <begin position="1"/>
        <end position="396"/>
    </location>
</feature>
<feature type="region of interest" description="Flexible loop" evidence="1">
    <location>
        <begin position="98"/>
        <end position="108"/>
    </location>
</feature>
<feature type="binding site" description="in other chain" evidence="1">
    <location>
        <position position="14"/>
    </location>
    <ligand>
        <name>ATP</name>
        <dbReference type="ChEBI" id="CHEBI:30616"/>
        <note>ligand shared between two neighboring subunits</note>
    </ligand>
</feature>
<feature type="binding site" evidence="1">
    <location>
        <position position="16"/>
    </location>
    <ligand>
        <name>Mg(2+)</name>
        <dbReference type="ChEBI" id="CHEBI:18420"/>
    </ligand>
</feature>
<feature type="binding site" evidence="1">
    <location>
        <position position="42"/>
    </location>
    <ligand>
        <name>K(+)</name>
        <dbReference type="ChEBI" id="CHEBI:29103"/>
    </ligand>
</feature>
<feature type="binding site" description="in other chain" evidence="1">
    <location>
        <position position="55"/>
    </location>
    <ligand>
        <name>L-methionine</name>
        <dbReference type="ChEBI" id="CHEBI:57844"/>
        <note>ligand shared between two neighboring subunits</note>
    </ligand>
</feature>
<feature type="binding site" description="in other chain" evidence="1">
    <location>
        <position position="98"/>
    </location>
    <ligand>
        <name>L-methionine</name>
        <dbReference type="ChEBI" id="CHEBI:57844"/>
        <note>ligand shared between two neighboring subunits</note>
    </ligand>
</feature>
<feature type="binding site" description="in other chain" evidence="1">
    <location>
        <begin position="174"/>
        <end position="176"/>
    </location>
    <ligand>
        <name>ATP</name>
        <dbReference type="ChEBI" id="CHEBI:30616"/>
        <note>ligand shared between two neighboring subunits</note>
    </ligand>
</feature>
<feature type="binding site" description="in other chain" evidence="1">
    <location>
        <begin position="240"/>
        <end position="241"/>
    </location>
    <ligand>
        <name>ATP</name>
        <dbReference type="ChEBI" id="CHEBI:30616"/>
        <note>ligand shared between two neighboring subunits</note>
    </ligand>
</feature>
<feature type="binding site" evidence="1">
    <location>
        <position position="249"/>
    </location>
    <ligand>
        <name>ATP</name>
        <dbReference type="ChEBI" id="CHEBI:30616"/>
        <note>ligand shared between two neighboring subunits</note>
    </ligand>
</feature>
<feature type="binding site" evidence="1">
    <location>
        <position position="249"/>
    </location>
    <ligand>
        <name>L-methionine</name>
        <dbReference type="ChEBI" id="CHEBI:57844"/>
        <note>ligand shared between two neighboring subunits</note>
    </ligand>
</feature>
<feature type="binding site" description="in other chain" evidence="1">
    <location>
        <begin position="255"/>
        <end position="256"/>
    </location>
    <ligand>
        <name>ATP</name>
        <dbReference type="ChEBI" id="CHEBI:30616"/>
        <note>ligand shared between two neighboring subunits</note>
    </ligand>
</feature>
<feature type="binding site" evidence="1">
    <location>
        <position position="272"/>
    </location>
    <ligand>
        <name>ATP</name>
        <dbReference type="ChEBI" id="CHEBI:30616"/>
        <note>ligand shared between two neighboring subunits</note>
    </ligand>
</feature>
<feature type="binding site" evidence="1">
    <location>
        <position position="276"/>
    </location>
    <ligand>
        <name>ATP</name>
        <dbReference type="ChEBI" id="CHEBI:30616"/>
        <note>ligand shared between two neighboring subunits</note>
    </ligand>
</feature>
<feature type="binding site" description="in other chain" evidence="1">
    <location>
        <position position="280"/>
    </location>
    <ligand>
        <name>L-methionine</name>
        <dbReference type="ChEBI" id="CHEBI:57844"/>
        <note>ligand shared between two neighboring subunits</note>
    </ligand>
</feature>
<gene>
    <name evidence="1" type="primary">metK</name>
    <name type="ordered locus">Csac_0857</name>
</gene>
<protein>
    <recommendedName>
        <fullName evidence="1">S-adenosylmethionine synthase</fullName>
        <shortName evidence="1">AdoMet synthase</shortName>
        <ecNumber evidence="1">2.5.1.6</ecNumber>
    </recommendedName>
    <alternativeName>
        <fullName evidence="1">MAT</fullName>
    </alternativeName>
    <alternativeName>
        <fullName evidence="1">Methionine adenosyltransferase</fullName>
    </alternativeName>
</protein>
<proteinExistence type="inferred from homology"/>
<keyword id="KW-0067">ATP-binding</keyword>
<keyword id="KW-0963">Cytoplasm</keyword>
<keyword id="KW-0460">Magnesium</keyword>
<keyword id="KW-0479">Metal-binding</keyword>
<keyword id="KW-0547">Nucleotide-binding</keyword>
<keyword id="KW-0554">One-carbon metabolism</keyword>
<keyword id="KW-0630">Potassium</keyword>
<keyword id="KW-0808">Transferase</keyword>